<comment type="function">
    <text evidence="1">Catalyzes the irreversible NADPH-dependent deamination of GMP to IMP. It functions in the conversion of nucleobase, nucleoside and nucleotide derivatives of G to A nucleotides, and in maintaining the intracellular balance of A and G nucleotides.</text>
</comment>
<comment type="catalytic activity">
    <reaction evidence="1">
        <text>IMP + NH4(+) + NADP(+) = GMP + NADPH + 2 H(+)</text>
        <dbReference type="Rhea" id="RHEA:17185"/>
        <dbReference type="ChEBI" id="CHEBI:15378"/>
        <dbReference type="ChEBI" id="CHEBI:28938"/>
        <dbReference type="ChEBI" id="CHEBI:57783"/>
        <dbReference type="ChEBI" id="CHEBI:58053"/>
        <dbReference type="ChEBI" id="CHEBI:58115"/>
        <dbReference type="ChEBI" id="CHEBI:58349"/>
        <dbReference type="EC" id="1.7.1.7"/>
    </reaction>
</comment>
<comment type="subunit">
    <text evidence="1">Homotetramer.</text>
</comment>
<comment type="similarity">
    <text evidence="1">Belongs to the IMPDH/GMPR family. GuaC type 1 subfamily.</text>
</comment>
<reference key="1">
    <citation type="journal article" date="2008" name="BMC Genomics">
        <title>The genome sequence of the fish pathogen Aliivibrio salmonicida strain LFI1238 shows extensive evidence of gene decay.</title>
        <authorList>
            <person name="Hjerde E."/>
            <person name="Lorentzen M.S."/>
            <person name="Holden M.T."/>
            <person name="Seeger K."/>
            <person name="Paulsen S."/>
            <person name="Bason N."/>
            <person name="Churcher C."/>
            <person name="Harris D."/>
            <person name="Norbertczak H."/>
            <person name="Quail M.A."/>
            <person name="Sanders S."/>
            <person name="Thurston S."/>
            <person name="Parkhill J."/>
            <person name="Willassen N.P."/>
            <person name="Thomson N.R."/>
        </authorList>
    </citation>
    <scope>NUCLEOTIDE SEQUENCE [LARGE SCALE GENOMIC DNA]</scope>
    <source>
        <strain>LFI1238</strain>
    </source>
</reference>
<name>GUAC_ALISL</name>
<sequence length="347" mass="37272">MRIEQELKLGFKDVLFRPKRSTLKSRSQVELTREFTFKHSGRQWSGTPVIAANMDSVGSFAMAKALSEHGVMTAIHKHYTVEDWAGFVKENDASVLNNSMVSTGTSDADFQKTKDIMALTDDLIFICVDIANGYSEHLVQYVEKVRAEFPDKVISAGNVVTGDMVEELILAGADIVKVGIGPGSVCTTRVKTGVGYPQLSAIIECADAAHGLGGRIIGDGGCSCAGDVSKAFGGGADFVMLGGMLAGHEESGGEVIEQDGKQFMKFYGMSSQSAMDKHSGGVAKYRAAEGKTVLLPYRGSVHTTISDILGGVRSTCTYVGAAKLRELTKRTTFIRVQEQENNVYGKE</sequence>
<dbReference type="EC" id="1.7.1.7" evidence="1"/>
<dbReference type="EMBL" id="FM178380">
    <property type="protein sequence ID" value="CAQ81255.1"/>
    <property type="molecule type" value="Genomic_DNA"/>
</dbReference>
<dbReference type="RefSeq" id="WP_012551832.1">
    <property type="nucleotide sequence ID" value="NC_011313.1"/>
</dbReference>
<dbReference type="SMR" id="B6ERC3"/>
<dbReference type="KEGG" id="vsa:VSAL_II0501"/>
<dbReference type="eggNOG" id="COG0516">
    <property type="taxonomic scope" value="Bacteria"/>
</dbReference>
<dbReference type="HOGENOM" id="CLU_022552_5_3_6"/>
<dbReference type="Proteomes" id="UP000001730">
    <property type="component" value="Chromosome 2"/>
</dbReference>
<dbReference type="GO" id="GO:0005829">
    <property type="term" value="C:cytosol"/>
    <property type="evidence" value="ECO:0007669"/>
    <property type="project" value="TreeGrafter"/>
</dbReference>
<dbReference type="GO" id="GO:1902560">
    <property type="term" value="C:GMP reductase complex"/>
    <property type="evidence" value="ECO:0007669"/>
    <property type="project" value="InterPro"/>
</dbReference>
<dbReference type="GO" id="GO:0003920">
    <property type="term" value="F:GMP reductase activity"/>
    <property type="evidence" value="ECO:0007669"/>
    <property type="project" value="UniProtKB-UniRule"/>
</dbReference>
<dbReference type="GO" id="GO:0046872">
    <property type="term" value="F:metal ion binding"/>
    <property type="evidence" value="ECO:0007669"/>
    <property type="project" value="UniProtKB-KW"/>
</dbReference>
<dbReference type="GO" id="GO:0006163">
    <property type="term" value="P:purine nucleotide metabolic process"/>
    <property type="evidence" value="ECO:0007669"/>
    <property type="project" value="UniProtKB-UniRule"/>
</dbReference>
<dbReference type="CDD" id="cd00381">
    <property type="entry name" value="IMPDH"/>
    <property type="match status" value="1"/>
</dbReference>
<dbReference type="FunFam" id="3.20.20.70:FF:000012">
    <property type="entry name" value="GMP reductase"/>
    <property type="match status" value="1"/>
</dbReference>
<dbReference type="Gene3D" id="3.20.20.70">
    <property type="entry name" value="Aldolase class I"/>
    <property type="match status" value="1"/>
</dbReference>
<dbReference type="HAMAP" id="MF_00596">
    <property type="entry name" value="GMP_reduct_type1"/>
    <property type="match status" value="1"/>
</dbReference>
<dbReference type="InterPro" id="IPR013785">
    <property type="entry name" value="Aldolase_TIM"/>
</dbReference>
<dbReference type="InterPro" id="IPR050139">
    <property type="entry name" value="GMP_reductase"/>
</dbReference>
<dbReference type="InterPro" id="IPR005993">
    <property type="entry name" value="GMPR"/>
</dbReference>
<dbReference type="InterPro" id="IPR015875">
    <property type="entry name" value="IMP_DH/GMP_Rdtase_CS"/>
</dbReference>
<dbReference type="InterPro" id="IPR001093">
    <property type="entry name" value="IMP_DH_GMPRt"/>
</dbReference>
<dbReference type="NCBIfam" id="TIGR01305">
    <property type="entry name" value="GMP_reduct_1"/>
    <property type="match status" value="1"/>
</dbReference>
<dbReference type="NCBIfam" id="NF003470">
    <property type="entry name" value="PRK05096.1"/>
    <property type="match status" value="1"/>
</dbReference>
<dbReference type="PANTHER" id="PTHR43170">
    <property type="entry name" value="GMP REDUCTASE"/>
    <property type="match status" value="1"/>
</dbReference>
<dbReference type="PANTHER" id="PTHR43170:SF5">
    <property type="entry name" value="GMP REDUCTASE"/>
    <property type="match status" value="1"/>
</dbReference>
<dbReference type="Pfam" id="PF00478">
    <property type="entry name" value="IMPDH"/>
    <property type="match status" value="1"/>
</dbReference>
<dbReference type="PIRSF" id="PIRSF000235">
    <property type="entry name" value="GMP_reductase"/>
    <property type="match status" value="1"/>
</dbReference>
<dbReference type="SMART" id="SM01240">
    <property type="entry name" value="IMPDH"/>
    <property type="match status" value="1"/>
</dbReference>
<dbReference type="SUPFAM" id="SSF51412">
    <property type="entry name" value="Inosine monophosphate dehydrogenase (IMPDH)"/>
    <property type="match status" value="1"/>
</dbReference>
<dbReference type="PROSITE" id="PS00487">
    <property type="entry name" value="IMP_DH_GMP_RED"/>
    <property type="match status" value="1"/>
</dbReference>
<keyword id="KW-0479">Metal-binding</keyword>
<keyword id="KW-0521">NADP</keyword>
<keyword id="KW-0560">Oxidoreductase</keyword>
<keyword id="KW-0630">Potassium</keyword>
<protein>
    <recommendedName>
        <fullName evidence="1">GMP reductase</fullName>
        <ecNumber evidence="1">1.7.1.7</ecNumber>
    </recommendedName>
    <alternativeName>
        <fullName evidence="1">Guanosine 5'-monophosphate oxidoreductase</fullName>
        <shortName evidence="1">Guanosine monophosphate reductase</shortName>
    </alternativeName>
</protein>
<gene>
    <name evidence="1" type="primary">guaC</name>
    <name type="ordered locus">VSAL_II0501</name>
</gene>
<evidence type="ECO:0000255" key="1">
    <source>
        <dbReference type="HAMAP-Rule" id="MF_00596"/>
    </source>
</evidence>
<feature type="chain" id="PRO_1000129849" description="GMP reductase">
    <location>
        <begin position="1"/>
        <end position="347"/>
    </location>
</feature>
<feature type="active site" description="Thioimidate intermediate" evidence="1">
    <location>
        <position position="186"/>
    </location>
</feature>
<feature type="binding site" evidence="1">
    <location>
        <begin position="108"/>
        <end position="131"/>
    </location>
    <ligand>
        <name>NADP(+)</name>
        <dbReference type="ChEBI" id="CHEBI:58349"/>
    </ligand>
</feature>
<feature type="binding site" evidence="1">
    <location>
        <position position="181"/>
    </location>
    <ligand>
        <name>K(+)</name>
        <dbReference type="ChEBI" id="CHEBI:29103"/>
    </ligand>
</feature>
<feature type="binding site" evidence="1">
    <location>
        <position position="183"/>
    </location>
    <ligand>
        <name>K(+)</name>
        <dbReference type="ChEBI" id="CHEBI:29103"/>
    </ligand>
</feature>
<feature type="binding site" evidence="1">
    <location>
        <begin position="216"/>
        <end position="239"/>
    </location>
    <ligand>
        <name>NADP(+)</name>
        <dbReference type="ChEBI" id="CHEBI:58349"/>
    </ligand>
</feature>
<accession>B6ERC3</accession>
<proteinExistence type="inferred from homology"/>
<organism>
    <name type="scientific">Aliivibrio salmonicida (strain LFI1238)</name>
    <name type="common">Vibrio salmonicida (strain LFI1238)</name>
    <dbReference type="NCBI Taxonomy" id="316275"/>
    <lineage>
        <taxon>Bacteria</taxon>
        <taxon>Pseudomonadati</taxon>
        <taxon>Pseudomonadota</taxon>
        <taxon>Gammaproteobacteria</taxon>
        <taxon>Vibrionales</taxon>
        <taxon>Vibrionaceae</taxon>
        <taxon>Aliivibrio</taxon>
    </lineage>
</organism>